<gene>
    <name type="primary">Gna11</name>
</gene>
<reference key="1">
    <citation type="submission" date="2000-02" db="EMBL/GenBank/DDBJ databases">
        <title>Rattus norvegicus guanine nucleotide binding protein alpha 11 subunit (G11).</title>
        <authorList>
            <person name="Strotmann R."/>
        </authorList>
    </citation>
    <scope>NUCLEOTIDE SEQUENCE [MRNA]</scope>
    <source>
        <tissue>Brain</tissue>
    </source>
</reference>
<feature type="chain" id="PRO_0000203748" description="Guanine nucleotide-binding protein subunit alpha-11">
    <location>
        <begin position="1"/>
        <end position="359"/>
    </location>
</feature>
<feature type="domain" description="G-alpha" evidence="5">
    <location>
        <begin position="38"/>
        <end position="359"/>
    </location>
</feature>
<feature type="region of interest" description="G1 motif" evidence="5">
    <location>
        <begin position="41"/>
        <end position="54"/>
    </location>
</feature>
<feature type="region of interest" description="G2 motif" evidence="5">
    <location>
        <begin position="178"/>
        <end position="186"/>
    </location>
</feature>
<feature type="region of interest" description="G3 motif" evidence="5">
    <location>
        <begin position="201"/>
        <end position="210"/>
    </location>
</feature>
<feature type="region of interest" description="G4 motif" evidence="5">
    <location>
        <begin position="270"/>
        <end position="277"/>
    </location>
</feature>
<feature type="region of interest" description="G5 motif" evidence="5">
    <location>
        <begin position="329"/>
        <end position="334"/>
    </location>
</feature>
<feature type="binding site" evidence="3">
    <location>
        <begin position="46"/>
        <end position="53"/>
    </location>
    <ligand>
        <name>GTP</name>
        <dbReference type="ChEBI" id="CHEBI:37565"/>
    </ligand>
</feature>
<feature type="binding site" evidence="2">
    <location>
        <position position="53"/>
    </location>
    <ligand>
        <name>Mg(2+)</name>
        <dbReference type="ChEBI" id="CHEBI:18420"/>
    </ligand>
</feature>
<feature type="binding site" evidence="2">
    <location>
        <begin position="180"/>
        <end position="183"/>
    </location>
    <ligand>
        <name>GTP</name>
        <dbReference type="ChEBI" id="CHEBI:37565"/>
    </ligand>
</feature>
<feature type="binding site" evidence="2">
    <location>
        <position position="186"/>
    </location>
    <ligand>
        <name>Mg(2+)</name>
        <dbReference type="ChEBI" id="CHEBI:18420"/>
    </ligand>
</feature>
<feature type="binding site" evidence="2">
    <location>
        <begin position="274"/>
        <end position="277"/>
    </location>
    <ligand>
        <name>GTP</name>
        <dbReference type="ChEBI" id="CHEBI:37565"/>
    </ligand>
</feature>
<feature type="binding site" evidence="2">
    <location>
        <position position="331"/>
    </location>
    <ligand>
        <name>GTP</name>
        <dbReference type="ChEBI" id="CHEBI:37565"/>
    </ligand>
</feature>
<feature type="lipid moiety-binding region" description="S-palmitoyl cysteine" evidence="3">
    <location>
        <position position="9"/>
    </location>
</feature>
<feature type="lipid moiety-binding region" description="S-palmitoyl cysteine" evidence="3">
    <location>
        <position position="10"/>
    </location>
</feature>
<organism>
    <name type="scientific">Rattus norvegicus</name>
    <name type="common">Rat</name>
    <dbReference type="NCBI Taxonomy" id="10116"/>
    <lineage>
        <taxon>Eukaryota</taxon>
        <taxon>Metazoa</taxon>
        <taxon>Chordata</taxon>
        <taxon>Craniata</taxon>
        <taxon>Vertebrata</taxon>
        <taxon>Euteleostomi</taxon>
        <taxon>Mammalia</taxon>
        <taxon>Eutheria</taxon>
        <taxon>Euarchontoglires</taxon>
        <taxon>Glires</taxon>
        <taxon>Rodentia</taxon>
        <taxon>Myomorpha</taxon>
        <taxon>Muroidea</taxon>
        <taxon>Muridae</taxon>
        <taxon>Murinae</taxon>
        <taxon>Rattus</taxon>
    </lineage>
</organism>
<comment type="function">
    <text evidence="1 3">Guanine nucleotide-binding proteins (G proteins) function as transducers downstream of G protein-coupled receptors (GPCRs) in numerous signaling cascades. The alpha chain contains the guanine nucleotide binding site and alternates between an active, GTP-bound state and an inactive, GDP-bound state. Signaling by an activated GPCR promotes GDP release and GTP binding. The alpha subunit has a low GTPase activity that converts bound GTP to GDP, thereby terminating the signal. Both GDP release and GTP hydrolysis are modulated by numerous regulatory proteins. Signaling is mediated via phospholipase C-beta-dependent inositol lipid hydrolysis for signal propagation: activates phospholipase C-beta: following GPCR activation, GNA11 activates PLC-beta (PLCB1, PLCB2, PLCB3 or PLCB4), leading to production of diacylglycerol (DAG) and inositol 1,4,5-trisphosphate (IP3). Transduces FFAR4 signaling in response to long-chain fatty acids (LCFAs) (By similarity). Together with GNAQ, required for heart development (By similarity). In the respiratory epithelium, transmits OXGR1-dependent signals that lead to downstream intracellular Ca(2+) release and mucocilliary clearance of airborne pathogens.</text>
</comment>
<comment type="catalytic activity">
    <reaction evidence="4">
        <text>GTP + H2O = GDP + phosphate + H(+)</text>
        <dbReference type="Rhea" id="RHEA:19669"/>
        <dbReference type="ChEBI" id="CHEBI:15377"/>
        <dbReference type="ChEBI" id="CHEBI:15378"/>
        <dbReference type="ChEBI" id="CHEBI:37565"/>
        <dbReference type="ChEBI" id="CHEBI:43474"/>
        <dbReference type="ChEBI" id="CHEBI:58189"/>
    </reaction>
    <physiologicalReaction direction="left-to-right" evidence="4">
        <dbReference type="Rhea" id="RHEA:19670"/>
    </physiologicalReaction>
</comment>
<comment type="subunit">
    <text evidence="3">G proteins are composed of 3 units; alpha, beta and gamma. The alpha chain contains the guanine nucleotide binding site. Interacts with RGS22. Interacts with NTSR1.</text>
</comment>
<comment type="subcellular location">
    <subcellularLocation>
        <location evidence="3">Cell membrane</location>
        <topology evidence="3">Lipid-anchor</topology>
    </subcellularLocation>
    <subcellularLocation>
        <location evidence="3">Cytoplasm</location>
    </subcellularLocation>
</comment>
<comment type="similarity">
    <text evidence="6">Belongs to the G-alpha family. G(q) subfamily.</text>
</comment>
<accession>Q9JID2</accession>
<sequence>MTLESMIACCLSDEVKESKRINAEIEKQLRRDKRDARRELKLLLLGTGESGKSTFIKQMRIIHGAGYSEEDKRGFTKLVYQNIFTAMQAVVRAMDTLKIRYKYEQNKANALLIREVDVEKVTTFEHQYVNAIKTLWSDPGVQECYDRRREFQLSDSAKYYLTDVDRIATVGYLPTQQDVLRVRVPTTGIIEYPFDLENIIFRMVDVGGQRSERRKWIHCFENVTSIMFLVALSEYDQVLVESDNENRMEESKALFRTIITYPWFQHSSVILFLNKKDLLEDKILHSHLVDYFPEFDGPQRDAQAAREFILKMFVDLNPDSDKIIYSHFTCATDTENIRFVFAAVKDTILQLNLKEYNLV</sequence>
<name>GNA11_RAT</name>
<protein>
    <recommendedName>
        <fullName>Guanine nucleotide-binding protein subunit alpha-11</fullName>
        <shortName>G alpha-11</shortName>
        <shortName>G-protein subunit alpha-11</shortName>
    </recommendedName>
</protein>
<proteinExistence type="evidence at transcript level"/>
<evidence type="ECO:0000250" key="1">
    <source>
        <dbReference type="UniProtKB" id="P21278"/>
    </source>
</evidence>
<evidence type="ECO:0000250" key="2">
    <source>
        <dbReference type="UniProtKB" id="P27600"/>
    </source>
</evidence>
<evidence type="ECO:0000250" key="3">
    <source>
        <dbReference type="UniProtKB" id="P29992"/>
    </source>
</evidence>
<evidence type="ECO:0000250" key="4">
    <source>
        <dbReference type="UniProtKB" id="P50148"/>
    </source>
</evidence>
<evidence type="ECO:0000255" key="5">
    <source>
        <dbReference type="PROSITE-ProRule" id="PRU01230"/>
    </source>
</evidence>
<evidence type="ECO:0000305" key="6"/>
<keyword id="KW-1003">Cell membrane</keyword>
<keyword id="KW-0963">Cytoplasm</keyword>
<keyword id="KW-0342">GTP-binding</keyword>
<keyword id="KW-0378">Hydrolase</keyword>
<keyword id="KW-0449">Lipoprotein</keyword>
<keyword id="KW-0460">Magnesium</keyword>
<keyword id="KW-0472">Membrane</keyword>
<keyword id="KW-0479">Metal-binding</keyword>
<keyword id="KW-0547">Nucleotide-binding</keyword>
<keyword id="KW-0564">Palmitate</keyword>
<keyword id="KW-1185">Reference proteome</keyword>
<keyword id="KW-0807">Transducer</keyword>
<dbReference type="EMBL" id="AF239674">
    <property type="protein sequence ID" value="AAF81690.1"/>
    <property type="molecule type" value="mRNA"/>
</dbReference>
<dbReference type="RefSeq" id="NP_112295.1">
    <property type="nucleotide sequence ID" value="NM_031033.1"/>
</dbReference>
<dbReference type="SMR" id="Q9JID2"/>
<dbReference type="BioGRID" id="249562">
    <property type="interactions" value="1"/>
</dbReference>
<dbReference type="FunCoup" id="Q9JID2">
    <property type="interactions" value="1833"/>
</dbReference>
<dbReference type="STRING" id="10116.ENSRNOP00000007498"/>
<dbReference type="iPTMnet" id="Q9JID2"/>
<dbReference type="PhosphoSitePlus" id="Q9JID2"/>
<dbReference type="SwissPalm" id="Q9JID2"/>
<dbReference type="jPOST" id="Q9JID2"/>
<dbReference type="PaxDb" id="10116-ENSRNOP00000007498"/>
<dbReference type="GeneID" id="81662"/>
<dbReference type="KEGG" id="rno:81662"/>
<dbReference type="UCSC" id="RGD:619749">
    <property type="organism name" value="rat"/>
</dbReference>
<dbReference type="AGR" id="RGD:619749"/>
<dbReference type="CTD" id="2767"/>
<dbReference type="RGD" id="619749">
    <property type="gene designation" value="Gna11"/>
</dbReference>
<dbReference type="eggNOG" id="KOG0085">
    <property type="taxonomic scope" value="Eukaryota"/>
</dbReference>
<dbReference type="InParanoid" id="Q9JID2"/>
<dbReference type="PhylomeDB" id="Q9JID2"/>
<dbReference type="Reactome" id="R-RNO-112043">
    <property type="pathway name" value="PLC beta mediated events"/>
</dbReference>
<dbReference type="Reactome" id="R-RNO-202040">
    <property type="pathway name" value="G-protein activation"/>
</dbReference>
<dbReference type="Reactome" id="R-RNO-399997">
    <property type="pathway name" value="Acetylcholine regulates insulin secretion"/>
</dbReference>
<dbReference type="Reactome" id="R-RNO-416476">
    <property type="pathway name" value="G alpha (q) signalling events"/>
</dbReference>
<dbReference type="Reactome" id="R-RNO-418592">
    <property type="pathway name" value="ADP signalling through P2Y purinoceptor 1"/>
</dbReference>
<dbReference type="Reactome" id="R-RNO-428930">
    <property type="pathway name" value="Thromboxane signalling through TP receptor"/>
</dbReference>
<dbReference type="Reactome" id="R-RNO-434316">
    <property type="pathway name" value="Fatty Acids bound to GPR40 (FFAR1) regulate insulin secretion"/>
</dbReference>
<dbReference type="Reactome" id="R-RNO-456926">
    <property type="pathway name" value="Thrombin signalling through proteinase activated receptors (PARs)"/>
</dbReference>
<dbReference type="Reactome" id="R-RNO-9856530">
    <property type="pathway name" value="High laminar flow shear stress activates signaling by PIEZO1 and PECAM1:CDH5:KDR in endothelial cells"/>
</dbReference>
<dbReference type="PRO" id="PR:Q9JID2"/>
<dbReference type="Proteomes" id="UP000002494">
    <property type="component" value="Unplaced"/>
</dbReference>
<dbReference type="GO" id="GO:0005737">
    <property type="term" value="C:cytoplasm"/>
    <property type="evidence" value="ECO:0000266"/>
    <property type="project" value="RGD"/>
</dbReference>
<dbReference type="GO" id="GO:0005834">
    <property type="term" value="C:heterotrimeric G-protein complex"/>
    <property type="evidence" value="ECO:0000314"/>
    <property type="project" value="MGI"/>
</dbReference>
<dbReference type="GO" id="GO:0005886">
    <property type="term" value="C:plasma membrane"/>
    <property type="evidence" value="ECO:0000266"/>
    <property type="project" value="RGD"/>
</dbReference>
<dbReference type="GO" id="GO:0098793">
    <property type="term" value="C:presynapse"/>
    <property type="evidence" value="ECO:0000314"/>
    <property type="project" value="SynGO"/>
</dbReference>
<dbReference type="GO" id="GO:0047391">
    <property type="term" value="F:alkylglycerophosphoethanolamine phosphodiesterase activity"/>
    <property type="evidence" value="ECO:0000314"/>
    <property type="project" value="MGI"/>
</dbReference>
<dbReference type="GO" id="GO:0030234">
    <property type="term" value="F:enzyme regulator activity"/>
    <property type="evidence" value="ECO:0000266"/>
    <property type="project" value="RGD"/>
</dbReference>
<dbReference type="GO" id="GO:0003925">
    <property type="term" value="F:G protein activity"/>
    <property type="evidence" value="ECO:0000266"/>
    <property type="project" value="RGD"/>
</dbReference>
<dbReference type="GO" id="GO:0001664">
    <property type="term" value="F:G protein-coupled receptor binding"/>
    <property type="evidence" value="ECO:0000318"/>
    <property type="project" value="GO_Central"/>
</dbReference>
<dbReference type="GO" id="GO:0031683">
    <property type="term" value="F:G-protein beta/gamma-subunit complex binding"/>
    <property type="evidence" value="ECO:0000318"/>
    <property type="project" value="GO_Central"/>
</dbReference>
<dbReference type="GO" id="GO:0005525">
    <property type="term" value="F:GTP binding"/>
    <property type="evidence" value="ECO:0007669"/>
    <property type="project" value="UniProtKB-KW"/>
</dbReference>
<dbReference type="GO" id="GO:0003924">
    <property type="term" value="F:GTPase activity"/>
    <property type="evidence" value="ECO:0000318"/>
    <property type="project" value="GO_Central"/>
</dbReference>
<dbReference type="GO" id="GO:0019001">
    <property type="term" value="F:guanyl nucleotide binding"/>
    <property type="evidence" value="ECO:0000304"/>
    <property type="project" value="RGD"/>
</dbReference>
<dbReference type="GO" id="GO:0046872">
    <property type="term" value="F:metal ion binding"/>
    <property type="evidence" value="ECO:0007669"/>
    <property type="project" value="UniProtKB-KW"/>
</dbReference>
<dbReference type="GO" id="GO:0044877">
    <property type="term" value="F:protein-containing complex binding"/>
    <property type="evidence" value="ECO:0000353"/>
    <property type="project" value="RGD"/>
</dbReference>
<dbReference type="GO" id="GO:0001508">
    <property type="term" value="P:action potential"/>
    <property type="evidence" value="ECO:0000266"/>
    <property type="project" value="RGD"/>
</dbReference>
<dbReference type="GO" id="GO:0007188">
    <property type="term" value="P:adenylate cyclase-modulating G protein-coupled receptor signaling pathway"/>
    <property type="evidence" value="ECO:0000318"/>
    <property type="project" value="GO_Central"/>
</dbReference>
<dbReference type="GO" id="GO:0071467">
    <property type="term" value="P:cellular response to pH"/>
    <property type="evidence" value="ECO:0000266"/>
    <property type="project" value="RGD"/>
</dbReference>
<dbReference type="GO" id="GO:1904888">
    <property type="term" value="P:cranial skeletal system development"/>
    <property type="evidence" value="ECO:0000266"/>
    <property type="project" value="RGD"/>
</dbReference>
<dbReference type="GO" id="GO:0048066">
    <property type="term" value="P:developmental pigmentation"/>
    <property type="evidence" value="ECO:0000266"/>
    <property type="project" value="RGD"/>
</dbReference>
<dbReference type="GO" id="GO:0086100">
    <property type="term" value="P:endothelin receptor signaling pathway"/>
    <property type="evidence" value="ECO:0000266"/>
    <property type="project" value="RGD"/>
</dbReference>
<dbReference type="GO" id="GO:0007186">
    <property type="term" value="P:G protein-coupled receptor signaling pathway"/>
    <property type="evidence" value="ECO:0000266"/>
    <property type="project" value="RGD"/>
</dbReference>
<dbReference type="GO" id="GO:0007507">
    <property type="term" value="P:heart development"/>
    <property type="evidence" value="ECO:0000266"/>
    <property type="project" value="RGD"/>
</dbReference>
<dbReference type="GO" id="GO:1990806">
    <property type="term" value="P:ligand-gated ion channel signaling pathway"/>
    <property type="evidence" value="ECO:0000266"/>
    <property type="project" value="RGD"/>
</dbReference>
<dbReference type="GO" id="GO:0060158">
    <property type="term" value="P:phospholipase C-activating dopamine receptor signaling pathway"/>
    <property type="evidence" value="ECO:0000266"/>
    <property type="project" value="RGD"/>
</dbReference>
<dbReference type="GO" id="GO:0007207">
    <property type="term" value="P:phospholipase C-activating G protein-coupled acetylcholine receptor signaling pathway"/>
    <property type="evidence" value="ECO:0000266"/>
    <property type="project" value="RGD"/>
</dbReference>
<dbReference type="GO" id="GO:0007200">
    <property type="term" value="P:phospholipase C-activating G protein-coupled receptor signaling pathway"/>
    <property type="evidence" value="ECO:0000266"/>
    <property type="project" value="RGD"/>
</dbReference>
<dbReference type="GO" id="GO:0032024">
    <property type="term" value="P:positive regulation of insulin secretion"/>
    <property type="evidence" value="ECO:0000266"/>
    <property type="project" value="RGD"/>
</dbReference>
<dbReference type="GO" id="GO:0008217">
    <property type="term" value="P:regulation of blood pressure"/>
    <property type="evidence" value="ECO:0000266"/>
    <property type="project" value="RGD"/>
</dbReference>
<dbReference type="GO" id="GO:0045634">
    <property type="term" value="P:regulation of melanocyte differentiation"/>
    <property type="evidence" value="ECO:0000266"/>
    <property type="project" value="RGD"/>
</dbReference>
<dbReference type="GO" id="GO:0001501">
    <property type="term" value="P:skeletal system development"/>
    <property type="evidence" value="ECO:0000266"/>
    <property type="project" value="RGD"/>
</dbReference>
<dbReference type="CDD" id="cd00066">
    <property type="entry name" value="G-alpha"/>
    <property type="match status" value="1"/>
</dbReference>
<dbReference type="FunFam" id="3.40.50.300:FF:003977">
    <property type="entry name" value="Guanine nucleotide-binding protein G(q) subunit alpha"/>
    <property type="match status" value="1"/>
</dbReference>
<dbReference type="FunFam" id="1.10.400.10:FF:000002">
    <property type="entry name" value="guanine nucleotide-binding protein G(Q) subunit alpha"/>
    <property type="match status" value="1"/>
</dbReference>
<dbReference type="FunFam" id="3.40.50.300:FF:000692">
    <property type="entry name" value="Guanine nucleotide-binding protein subunit alpha"/>
    <property type="match status" value="1"/>
</dbReference>
<dbReference type="Gene3D" id="1.10.400.10">
    <property type="entry name" value="GI Alpha 1, domain 2-like"/>
    <property type="match status" value="1"/>
</dbReference>
<dbReference type="Gene3D" id="3.40.50.300">
    <property type="entry name" value="P-loop containing nucleotide triphosphate hydrolases"/>
    <property type="match status" value="1"/>
</dbReference>
<dbReference type="InterPro" id="IPR000654">
    <property type="entry name" value="Gprotein_alpha_Q"/>
</dbReference>
<dbReference type="InterPro" id="IPR001019">
    <property type="entry name" value="Gprotein_alpha_su"/>
</dbReference>
<dbReference type="InterPro" id="IPR011025">
    <property type="entry name" value="GproteinA_insert"/>
</dbReference>
<dbReference type="InterPro" id="IPR027417">
    <property type="entry name" value="P-loop_NTPase"/>
</dbReference>
<dbReference type="PANTHER" id="PTHR10218">
    <property type="entry name" value="GTP-BINDING PROTEIN ALPHA SUBUNIT"/>
    <property type="match status" value="1"/>
</dbReference>
<dbReference type="PANTHER" id="PTHR10218:SF328">
    <property type="entry name" value="GUANINE NUCLEOTIDE-BINDING PROTEIN SUBUNIT ALPHA-11"/>
    <property type="match status" value="1"/>
</dbReference>
<dbReference type="Pfam" id="PF00503">
    <property type="entry name" value="G-alpha"/>
    <property type="match status" value="1"/>
</dbReference>
<dbReference type="PRINTS" id="PR00318">
    <property type="entry name" value="GPROTEINA"/>
</dbReference>
<dbReference type="PRINTS" id="PR00442">
    <property type="entry name" value="GPROTEINAQ"/>
</dbReference>
<dbReference type="SMART" id="SM00275">
    <property type="entry name" value="G_alpha"/>
    <property type="match status" value="1"/>
</dbReference>
<dbReference type="SUPFAM" id="SSF52540">
    <property type="entry name" value="P-loop containing nucleoside triphosphate hydrolases"/>
    <property type="match status" value="1"/>
</dbReference>
<dbReference type="SUPFAM" id="SSF47895">
    <property type="entry name" value="Transducin (alpha subunit), insertion domain"/>
    <property type="match status" value="1"/>
</dbReference>
<dbReference type="PROSITE" id="PS51882">
    <property type="entry name" value="G_ALPHA"/>
    <property type="match status" value="1"/>
</dbReference>